<proteinExistence type="evidence at protein level"/>
<keyword id="KW-0002">3D-structure</keyword>
<keyword id="KW-0014">AIDS</keyword>
<keyword id="KW-0053">Apoptosis</keyword>
<keyword id="KW-1165">Clathrin-mediated endocytosis of virus by host</keyword>
<keyword id="KW-0165">Cleavage on pair of basic residues</keyword>
<keyword id="KW-0175">Coiled coil</keyword>
<keyword id="KW-1015">Disulfide bond</keyword>
<keyword id="KW-1170">Fusion of virus membrane with host endosomal membrane</keyword>
<keyword id="KW-1168">Fusion of virus membrane with host membrane</keyword>
<keyword id="KW-0325">Glycoprotein</keyword>
<keyword id="KW-1032">Host cell membrane</keyword>
<keyword id="KW-1039">Host endosome</keyword>
<keyword id="KW-1043">Host membrane</keyword>
<keyword id="KW-0945">Host-virus interaction</keyword>
<keyword id="KW-0449">Lipoprotein</keyword>
<keyword id="KW-0472">Membrane</keyword>
<keyword id="KW-0564">Palmitate</keyword>
<keyword id="KW-0732">Signal</keyword>
<keyword id="KW-0812">Transmembrane</keyword>
<keyword id="KW-1133">Transmembrane helix</keyword>
<keyword id="KW-1161">Viral attachment to host cell</keyword>
<keyword id="KW-0261">Viral envelope protein</keyword>
<keyword id="KW-0899">Viral immunoevasion</keyword>
<keyword id="KW-1162">Viral penetration into host cytoplasm</keyword>
<keyword id="KW-0946">Virion</keyword>
<keyword id="KW-1164">Virus endocytosis by host</keyword>
<keyword id="KW-1160">Virus entry into host cell</keyword>
<feature type="signal peptide" evidence="1">
    <location>
        <begin position="1"/>
        <end position="32"/>
    </location>
</feature>
<feature type="chain" id="PRO_0000239467" description="Envelope glycoprotein gp160" evidence="1">
    <location>
        <begin position="33"/>
        <end position="856"/>
    </location>
</feature>
<feature type="chain" id="PRO_0000038373" description="Surface protein gp120" evidence="1">
    <location>
        <begin position="33"/>
        <end position="511"/>
    </location>
</feature>
<feature type="chain" id="PRO_0000038374" description="Transmembrane protein gp41" evidence="1">
    <location>
        <begin position="512"/>
        <end position="856"/>
    </location>
</feature>
<feature type="topological domain" description="Extracellular" evidence="1">
    <location>
        <begin position="33"/>
        <end position="684"/>
    </location>
</feature>
<feature type="transmembrane region" description="Helical" evidence="1">
    <location>
        <begin position="685"/>
        <end position="705"/>
    </location>
</feature>
<feature type="topological domain" description="Cytoplasmic" evidence="1">
    <location>
        <begin position="706"/>
        <end position="856"/>
    </location>
</feature>
<feature type="region of interest" description="V1" evidence="1">
    <location>
        <begin position="131"/>
        <end position="156"/>
    </location>
</feature>
<feature type="region of interest" description="V2" evidence="1">
    <location>
        <begin position="157"/>
        <end position="196"/>
    </location>
</feature>
<feature type="region of interest" description="V3" evidence="1">
    <location>
        <begin position="296"/>
        <end position="330"/>
    </location>
</feature>
<feature type="region of interest" description="CD4-binding loop" evidence="1">
    <location>
        <begin position="364"/>
        <end position="374"/>
    </location>
</feature>
<feature type="region of interest" description="V4" evidence="1">
    <location>
        <begin position="385"/>
        <end position="418"/>
    </location>
</feature>
<feature type="region of interest" description="V5">
    <location>
        <begin position="461"/>
        <end position="471"/>
    </location>
</feature>
<feature type="region of interest" description="V5" evidence="1">
    <location>
        <begin position="463"/>
        <end position="471"/>
    </location>
</feature>
<feature type="region of interest" description="Fusion peptide" evidence="1">
    <location>
        <begin position="512"/>
        <end position="532"/>
    </location>
</feature>
<feature type="region of interest" description="Immunosuppression" evidence="1">
    <location>
        <begin position="574"/>
        <end position="592"/>
    </location>
</feature>
<feature type="region of interest" description="MPER; binding to GalCer" evidence="1">
    <location>
        <begin position="662"/>
        <end position="683"/>
    </location>
</feature>
<feature type="region of interest" description="Disordered" evidence="2">
    <location>
        <begin position="715"/>
        <end position="742"/>
    </location>
</feature>
<feature type="coiled-coil region" evidence="1">
    <location>
        <begin position="633"/>
        <end position="667"/>
    </location>
</feature>
<feature type="short sequence motif" description="Di-leucine internalization motif" evidence="1">
    <location>
        <begin position="855"/>
        <end position="856"/>
    </location>
</feature>
<feature type="site" description="Cleavage; by host furin" evidence="1">
    <location>
        <begin position="511"/>
        <end position="512"/>
    </location>
</feature>
<feature type="lipid moiety-binding region" description="S-palmitoyl cysteine; by host" evidence="1">
    <location>
        <position position="764"/>
    </location>
</feature>
<feature type="lipid moiety-binding region" description="S-palmitoyl cysteine; by host" evidence="1">
    <location>
        <position position="837"/>
    </location>
</feature>
<feature type="glycosylation site" description="N-linked (GlcNAc...) asparagine; by host" evidence="1">
    <location>
        <position position="88"/>
    </location>
</feature>
<feature type="glycosylation site" description="N-linked (GlcNAc...) asparagine; by host" evidence="1">
    <location>
        <position position="136"/>
    </location>
</feature>
<feature type="glycosylation site" description="N-linked (GlcNAc...) asparagine; by host" evidence="1">
    <location>
        <position position="141"/>
    </location>
</feature>
<feature type="glycosylation site" description="N-linked (GlcNAc...) asparagine; by host" evidence="1">
    <location>
        <position position="156"/>
    </location>
</feature>
<feature type="glycosylation site" description="N-linked (GlcNAc...) asparagine; by host" evidence="1">
    <location>
        <position position="160"/>
    </location>
</feature>
<feature type="glycosylation site" description="N-linked (GlcNAc...) asparagine; by host" evidence="1">
    <location>
        <position position="186"/>
    </location>
</feature>
<feature type="glycosylation site" description="N-linked (GlcNAc...) asparagine; by host" evidence="1">
    <location>
        <position position="197"/>
    </location>
</feature>
<feature type="glycosylation site" description="N-linked (GlcNAc...) asparagine; by host" evidence="1">
    <location>
        <position position="230"/>
    </location>
</feature>
<feature type="glycosylation site" description="N-linked (GlcNAc...) asparagine; by host" evidence="1">
    <location>
        <position position="234"/>
    </location>
</feature>
<feature type="glycosylation site" description="N-linked (GlcNAc...) asparagine; by host" evidence="1">
    <location>
        <position position="241"/>
    </location>
</feature>
<feature type="glycosylation site" description="N-linked (GlcNAc...) asparagine; by host" evidence="1">
    <location>
        <position position="262"/>
    </location>
</feature>
<feature type="glycosylation site" description="N-linked (GlcNAc...) asparagine; by host" evidence="1">
    <location>
        <position position="276"/>
    </location>
</feature>
<feature type="glycosylation site" description="N-linked (GlcNAc...) asparagine; by host" evidence="1">
    <location>
        <position position="289"/>
    </location>
</feature>
<feature type="glycosylation site" description="N-linked (GlcNAc...) asparagine; by host" evidence="1">
    <location>
        <position position="295"/>
    </location>
</feature>
<feature type="glycosylation site" description="N-linked (GlcNAc...) asparagine; by host" evidence="1">
    <location>
        <position position="301"/>
    </location>
</feature>
<feature type="glycosylation site" description="N-linked (GlcNAc...) asparagine; by host" evidence="1">
    <location>
        <position position="332"/>
    </location>
</feature>
<feature type="glycosylation site" description="N-linked (GlcNAc...) asparagine; by host" evidence="1">
    <location>
        <position position="339"/>
    </location>
</feature>
<feature type="glycosylation site" description="N-linked (GlcNAc...) asparagine; by host" evidence="1">
    <location>
        <position position="356"/>
    </location>
</feature>
<feature type="glycosylation site" description="N-linked (GlcNAc...) asparagine; by host" evidence="1">
    <location>
        <position position="386"/>
    </location>
</feature>
<feature type="glycosylation site" description="N-linked (GlcNAc...) asparagine; by host" evidence="1">
    <location>
        <position position="392"/>
    </location>
</feature>
<feature type="glycosylation site" description="N-linked (GlcNAc...) asparagine; by host" evidence="1">
    <location>
        <position position="397"/>
    </location>
</feature>
<feature type="glycosylation site" description="N-linked (GlcNAc...) asparagine; by host" evidence="1">
    <location>
        <position position="406"/>
    </location>
</feature>
<feature type="glycosylation site" description="N-linked (GlcNAc...) asparagine; by host" evidence="1">
    <location>
        <position position="448"/>
    </location>
</feature>
<feature type="glycosylation site" description="N-linked (GlcNAc...) asparagine; by host" evidence="1">
    <location>
        <position position="463"/>
    </location>
</feature>
<feature type="glycosylation site" description="N-linked (GlcNAc...) asparagine; by host" evidence="1">
    <location>
        <position position="611"/>
    </location>
</feature>
<feature type="glycosylation site" description="N-linked (GlcNAc...) asparagine; by host" evidence="1">
    <location>
        <position position="616"/>
    </location>
</feature>
<feature type="glycosylation site" description="N-linked (GlcNAc...) asparagine; by host" evidence="1">
    <location>
        <position position="624"/>
    </location>
</feature>
<feature type="glycosylation site" description="N-linked (GlcNAc...) asparagine; by host" evidence="1">
    <location>
        <position position="637"/>
    </location>
</feature>
<feature type="glycosylation site" description="N-linked (GlcNAc...) asparagine; by host" evidence="1">
    <location>
        <position position="674"/>
    </location>
</feature>
<feature type="disulfide bond" evidence="1">
    <location>
        <begin position="54"/>
        <end position="74"/>
    </location>
</feature>
<feature type="disulfide bond" evidence="1">
    <location>
        <begin position="119"/>
        <end position="205"/>
    </location>
</feature>
<feature type="disulfide bond" evidence="1">
    <location>
        <begin position="126"/>
        <end position="196"/>
    </location>
</feature>
<feature type="disulfide bond" evidence="1">
    <location>
        <begin position="131"/>
        <end position="157"/>
    </location>
</feature>
<feature type="disulfide bond" evidence="1">
    <location>
        <begin position="218"/>
        <end position="247"/>
    </location>
</feature>
<feature type="disulfide bond" evidence="1">
    <location>
        <begin position="228"/>
        <end position="239"/>
    </location>
</feature>
<feature type="disulfide bond" evidence="1">
    <location>
        <begin position="296"/>
        <end position="331"/>
    </location>
</feature>
<feature type="disulfide bond" evidence="1">
    <location>
        <begin position="378"/>
        <end position="445"/>
    </location>
</feature>
<feature type="disulfide bond" evidence="1">
    <location>
        <begin position="385"/>
        <end position="418"/>
    </location>
</feature>
<feature type="disulfide bond" evidence="1">
    <location>
        <begin position="598"/>
        <end position="604"/>
    </location>
</feature>
<feature type="helix" evidence="3">
    <location>
        <begin position="535"/>
        <end position="540"/>
    </location>
</feature>
<feature type="helix" evidence="4">
    <location>
        <begin position="547"/>
        <end position="580"/>
    </location>
</feature>
<feature type="helix" evidence="5">
    <location>
        <begin position="633"/>
        <end position="682"/>
    </location>
</feature>
<comment type="function">
    <molecule>Envelope glycoprotein gp160</molecule>
    <text evidence="1">Oligomerizes in the host endoplasmic reticulum into predominantly trimers. In a second time, gp160 transits in the host Golgi, where glycosylation is completed. The precursor is then proteolytically cleaved in the trans-Golgi and thereby activated by cellular furin or furin-like proteases to produce gp120 and gp41.</text>
</comment>
<comment type="function">
    <molecule>Surface protein gp120</molecule>
    <text evidence="1">Attaches the virus to the host lymphoid cell by binding to the primary receptor CD4. This interaction induces a structural rearrangement creating a high affinity binding site for a chemokine coreceptor like CXCR4 and/or CCR5. Acts as a ligand for CD209/DC-SIGN and CLEC4M/DC-SIGNR, which are respectively found on dendritic cells (DCs), and on endothelial cells of liver sinusoids and lymph node sinuses. These interactions allow capture of viral particles at mucosal surfaces by these cells and subsequent transmission to permissive cells. HIV subverts the migration properties of dendritic cells to gain access to CD4+ T-cells in lymph nodes. Virus transmission to permissive T-cells occurs either in trans (without DCs infection, through viral capture and transmission), or in cis (following DCs productive infection, through the usual CD4-gp120 interaction), thereby inducing a robust infection. In trans infection, bound virions remain infectious over days and it is proposed that they are not degraded, but protected in non-lysosomal acidic organelles within the DCs close to the cell membrane thus contributing to the viral infectious potential during DCs' migration from the periphery to the lymphoid tissues. On arrival at lymphoid tissues, intact virions recycle back to DCs' cell surface allowing virus transmission to CD4+ T-cells.</text>
</comment>
<comment type="function">
    <molecule>Transmembrane protein gp41</molecule>
    <text evidence="1">Acts as a class I viral fusion protein. Under the current model, the protein has at least 3 conformational states: pre-fusion native state, pre-hairpin intermediate state, and post-fusion hairpin state. During fusion of viral and target intracellular membranes, the coiled coil regions (heptad repeats) assume a trimer-of-hairpins structure, positioning the fusion peptide in close proximity to the C-terminal region of the ectodomain. The formation of this structure appears to drive apposition and subsequent fusion of viral and target cell membranes. Complete fusion occurs in host cell endosomes and is dynamin-dependent, however some lipid transfer might occur at the plasma membrane. The virus undergoes clathrin-dependent internalization long before endosomal fusion, thus minimizing the surface exposure of conserved viral epitopes during fusion and reducing the efficacy of inhibitors targeting these epitopes. Membranes fusion leads to delivery of the nucleocapsid into the cytoplasm.</text>
</comment>
<comment type="subunit">
    <molecule>Surface protein gp120</molecule>
    <text evidence="1">The mature envelope protein (Env) consists of a homotrimer of non-covalently associated gp120-gp41 heterodimers. The resulting complex protrudes from the virus surface as a spike. There seems to be as few as 10 spikes on the average virion. Interacts with host CD4, CCR5 and CXCR4. Gp120 also interacts with the C-type lectins CD209/DC-SIGN and CLEC4M/DC-SIGNR (collectively referred to as DC-SIGN(R)). Gp120 and gp41 interact with GalCer. Gp120 interacts with host ITGA4/ITGB7 complex; on CD4+ T-cells, this interaction results in rapid activation of integrin ITGAL/LFA-1, which facilitates efficient cell-to-cell spreading of HIV-1. Gp120 interacts with cell-associated heparan sulfate; this interaction increases virus infectivity on permissive cells and may be involved in infection of CD4- cells.</text>
</comment>
<comment type="subunit">
    <molecule>Transmembrane protein gp41</molecule>
    <text evidence="1">The mature envelope protein (Env) consists of a homotrimer of non-covalently associated gp120-gp41 heterodimers. The resulting complex protrudes from the virus surface as a spike. There seems to be as few as 10 spikes on the average virion.</text>
</comment>
<comment type="subcellular location">
    <molecule>Surface protein gp120</molecule>
    <subcellularLocation>
        <location evidence="1">Virion membrane</location>
        <topology evidence="1">Peripheral membrane protein</topology>
    </subcellularLocation>
    <subcellularLocation>
        <location evidence="1">Host cell membrane</location>
        <topology evidence="1">Peripheral membrane protein</topology>
    </subcellularLocation>
    <subcellularLocation>
        <location evidence="1">Host endosome membrane</location>
        <topology evidence="1">Single-pass type I membrane protein</topology>
    </subcellularLocation>
    <text evidence="1">The surface protein is not anchored to the viral envelope, but associates with the extravirion surface through its binding to TM. It is probably concentrated at the site of budding and incorporated into the virions possibly by contacts between the cytoplasmic tail of Env and the N-terminus of Gag.</text>
</comment>
<comment type="subcellular location">
    <molecule>Transmembrane protein gp41</molecule>
    <subcellularLocation>
        <location evidence="1">Virion membrane</location>
        <topology evidence="1">Single-pass type I membrane protein</topology>
    </subcellularLocation>
    <subcellularLocation>
        <location evidence="1">Host cell membrane</location>
        <topology evidence="1">Single-pass type I membrane protein</topology>
    </subcellularLocation>
    <subcellularLocation>
        <location evidence="1">Host endosome membrane</location>
        <topology evidence="1">Single-pass type I membrane protein</topology>
    </subcellularLocation>
    <text evidence="1">It is probably concentrated at the site of budding and incorporated into the virions possibly by contacts between the cytoplasmic tail of Env and the N-terminus of Gag.</text>
</comment>
<comment type="domain">
    <text evidence="1">Some of the most genetically diverse regions of the viral genome are present in Env. They are called variable regions 1 through 5 (V1 through V5). Coreceptor usage of gp120 is determined mainly by the primary structure of the third variable region (V3) in the outer domain of gp120. The sequence of V3 determines which coreceptor, CCR5 and/or CXCR4 (corresponding to R5/macrophage, X4/T cell and R5X4/T cell and macrophage tropism), is used to trigger the fusion potential of the Env complex, and hence which cells the virus can infect. Binding to CCR5 involves a region adjacent in addition to V3.</text>
</comment>
<comment type="domain">
    <text evidence="1">The membrane proximal external region (MPER) present in gp41 is a tryptophan-rich region recognized by the antibodies 2F5, Z13, and 4E10. MPER seems to play a role in fusion.</text>
</comment>
<comment type="domain">
    <text evidence="1">The 17 amino acids long immunosuppressive region is present in many retroviral envelope proteins. Synthetic peptides derived from this relatively conserved sequence inhibit immune function in vitro and in vivo.</text>
</comment>
<comment type="domain">
    <text evidence="1">The YXXL motif is involved in determining the exact site of viral release at the surface of infected mononuclear cells and promotes endocytosis. YXXL and di-leucine endocytosis motifs interact directly or indirectly with the clathrin adapter complexes, opperate independently, and their activities are not additive.</text>
</comment>
<comment type="domain">
    <text evidence="1">The CD4-binding region is targeted by the antibody b12.</text>
</comment>
<comment type="PTM">
    <text evidence="1">Highly glycosylated by host. The high number of glycan on the protein is reffered to as 'glycan shield' because it contributes to hide protein sequence from adaptive immune system.</text>
</comment>
<comment type="PTM">
    <text evidence="1">Palmitoylation of the transmembrane protein and of Env polyprotein (prior to its proteolytic cleavage) is essential for their association with host cell membrane lipid rafts. Palmitoylation is therefore required for envelope trafficking to classical lipid rafts, but not for viral replication.</text>
</comment>
<comment type="PTM">
    <text evidence="1">Specific enzymatic cleavages in vivo yield mature proteins. Envelope glycoproteins are synthesized as an inactive precursor that is heavily N-glycosylated and processed likely by host cell furin in the Golgi to yield the mature SU and TM proteins. The cleavage site between SU and TM requires the minimal sequence [KR]-X-[KR]-R. About 2 of the 9 disulfide bonds of gp41 are reduced by P4HB/PDI, following binding to CD4 receptor.</text>
</comment>
<comment type="miscellaneous">
    <text evidence="1">Inhibitors targeting HIV-1 viral envelope proteins are used as antiretroviral drugs. Attachment of virions to the cell surface via non-specific interactions and CD4 binding can be blocked by inhibitors that include cyanovirin-N, cyclotriazadisulfonamide analogs, PRO 2000, TNX 355 and PRO 542. In addition, BMS 806 can block CD4-induced conformational changes. Env interactions with the coreceptor molecules can be targeted by CCR5 antagonists including SCH-D, maraviroc (UK 427857) and aplaviroc (GW 873140), and the CXCR4 antagonist AMD 070. Fusion of viral and cellular membranes can be inhibited by peptides such as enfuvirtide and tifuvirtide (T 1249). Resistance to inhibitors associated with mutations in Env are observed. Most of the time, single mutations confer only a modest reduction in drug susceptibility. Combination of several mutations is usually required to develop a high-level drug resistance.</text>
</comment>
<comment type="miscellaneous">
    <text evidence="1">HIV-1 lineages are divided in three main groups, M (for Major), O (for Outlier), and N (for New, or Non-M, Non-O). The vast majority of strains found worldwide belong to the group M. Group O seems to be endemic to and largely confined to Cameroon and neighboring countries in West Central Africa, where these viruses represent a small minority of HIV-1 strains. The group N is represented by a limited number of isolates from Cameroonian persons. The group M is further subdivided in 9 clades or subtypes (A to D, F to H, J and K).</text>
</comment>
<comment type="similarity">
    <text evidence="1">Belongs to the HIV-1 env protein family.</text>
</comment>
<comment type="online information" name="hivdb">
    <link uri="https://hivdb.stanford.edu"/>
    <text>HIV drug resistance database</text>
</comment>
<comment type="online information" name="HIV drug resistance mutations">
    <link uri="https://www.iasusa.org/hiv-drug-resistance/hiv-drug-resistance-mutations/"/>
</comment>
<organismHost>
    <name type="scientific">Homo sapiens</name>
    <name type="common">Human</name>
    <dbReference type="NCBI Taxonomy" id="9606"/>
</organismHost>
<protein>
    <recommendedName>
        <fullName evidence="1">Envelope glycoprotein gp160</fullName>
    </recommendedName>
    <alternativeName>
        <fullName evidence="1">Env polyprotein</fullName>
    </alternativeName>
    <component>
        <recommendedName>
            <fullName evidence="1">Surface protein gp120</fullName>
            <shortName evidence="1">SU</shortName>
        </recommendedName>
        <alternativeName>
            <fullName evidence="1">Glycoprotein 120</fullName>
            <shortName evidence="1">gp120</shortName>
        </alternativeName>
    </component>
    <component>
        <recommendedName>
            <fullName evidence="1">Transmembrane protein gp41</fullName>
            <shortName evidence="1">TM</shortName>
        </recommendedName>
        <alternativeName>
            <fullName evidence="1">Glycoprotein 41</fullName>
            <shortName evidence="1">gp41</shortName>
        </alternativeName>
    </component>
</protein>
<evidence type="ECO:0000255" key="1">
    <source>
        <dbReference type="HAMAP-Rule" id="MF_04083"/>
    </source>
</evidence>
<evidence type="ECO:0000256" key="2">
    <source>
        <dbReference type="SAM" id="MobiDB-lite"/>
    </source>
</evidence>
<evidence type="ECO:0007829" key="3">
    <source>
        <dbReference type="PDB" id="2X7R"/>
    </source>
</evidence>
<evidence type="ECO:0007829" key="4">
    <source>
        <dbReference type="PDB" id="3AHA"/>
    </source>
</evidence>
<evidence type="ECO:0007829" key="5">
    <source>
        <dbReference type="PDB" id="3GWO"/>
    </source>
</evidence>
<gene>
    <name evidence="1" type="primary">env</name>
</gene>
<dbReference type="EMBL" id="U12055">
    <property type="protein sequence ID" value="AAA76690.1"/>
    <property type="molecule type" value="Genomic_RNA"/>
</dbReference>
<dbReference type="PDB" id="2X7R">
    <property type="method" value="X-ray"/>
    <property type="resolution" value="2.00 A"/>
    <property type="chains" value="A/D/N=528-581, B/C/E=629-683"/>
</dbReference>
<dbReference type="PDB" id="2Z2T">
    <property type="method" value="X-ray"/>
    <property type="resolution" value="2.10 A"/>
    <property type="chains" value="A/B/C=546-581"/>
</dbReference>
<dbReference type="PDB" id="3AHA">
    <property type="method" value="X-ray"/>
    <property type="resolution" value="1.70 A"/>
    <property type="chains" value="A/C/E=548-581, B/D/F=628-660"/>
</dbReference>
<dbReference type="PDB" id="3CP1">
    <property type="method" value="X-ray"/>
    <property type="resolution" value="2.00 A"/>
    <property type="chains" value="A=536-663"/>
</dbReference>
<dbReference type="PDB" id="3CYO">
    <property type="method" value="X-ray"/>
    <property type="resolution" value="2.10 A"/>
    <property type="chains" value="A=536-663"/>
</dbReference>
<dbReference type="PDB" id="3GWO">
    <property type="method" value="X-ray"/>
    <property type="resolution" value="1.65 A"/>
    <property type="chains" value="A/B=630-683"/>
</dbReference>
<dbReference type="PDB" id="3H00">
    <property type="method" value="X-ray"/>
    <property type="resolution" value="2.20 A"/>
    <property type="chains" value="A/B/C/D=636-674"/>
</dbReference>
<dbReference type="PDB" id="3H01">
    <property type="method" value="X-ray"/>
    <property type="resolution" value="1.70 A"/>
    <property type="chains" value="A/B=630-683"/>
</dbReference>
<dbReference type="PDB" id="4I48">
    <property type="method" value="X-ray"/>
    <property type="resolution" value="2.80 A"/>
    <property type="chains" value="C=192-200"/>
</dbReference>
<dbReference type="PDB" id="5HFM">
    <property type="method" value="X-ray"/>
    <property type="resolution" value="2.30 A"/>
    <property type="chains" value="A/B/C/D/E/F=539-581"/>
</dbReference>
<dbReference type="PDB" id="6X58">
    <property type="method" value="X-ray"/>
    <property type="resolution" value="3.26 A"/>
    <property type="chains" value="E/F=669-683"/>
</dbReference>
<dbReference type="PDBsum" id="2X7R"/>
<dbReference type="PDBsum" id="2Z2T"/>
<dbReference type="PDBsum" id="3AHA"/>
<dbReference type="PDBsum" id="3CP1"/>
<dbReference type="PDBsum" id="3CYO"/>
<dbReference type="PDBsum" id="3GWO"/>
<dbReference type="PDBsum" id="3H00"/>
<dbReference type="PDBsum" id="3H01"/>
<dbReference type="PDBsum" id="4I48"/>
<dbReference type="PDBsum" id="5HFM"/>
<dbReference type="PDBsum" id="6X58"/>
<dbReference type="SMR" id="Q70626"/>
<dbReference type="GlyConnect" id="150">
    <property type="glycosylation" value="20 N-Linked glycans"/>
</dbReference>
<dbReference type="GlyCosmos" id="Q70626">
    <property type="glycosylation" value="29 sites, 36 glycans"/>
</dbReference>
<dbReference type="Reactome" id="R-HSA-5621480">
    <property type="pathway name" value="Dectin-2 family"/>
</dbReference>
<dbReference type="EvolutionaryTrace" id="Q70626"/>
<dbReference type="Proteomes" id="UP000165413">
    <property type="component" value="Genome"/>
</dbReference>
<dbReference type="GO" id="GO:0044175">
    <property type="term" value="C:host cell endosome membrane"/>
    <property type="evidence" value="ECO:0007669"/>
    <property type="project" value="UniProtKB-SubCell"/>
</dbReference>
<dbReference type="GO" id="GO:0020002">
    <property type="term" value="C:host cell plasma membrane"/>
    <property type="evidence" value="ECO:0007669"/>
    <property type="project" value="UniProtKB-SubCell"/>
</dbReference>
<dbReference type="GO" id="GO:0016020">
    <property type="term" value="C:membrane"/>
    <property type="evidence" value="ECO:0007669"/>
    <property type="project" value="UniProtKB-UniRule"/>
</dbReference>
<dbReference type="GO" id="GO:0019031">
    <property type="term" value="C:viral envelope"/>
    <property type="evidence" value="ECO:0007669"/>
    <property type="project" value="UniProtKB-KW"/>
</dbReference>
<dbReference type="GO" id="GO:0055036">
    <property type="term" value="C:virion membrane"/>
    <property type="evidence" value="ECO:0007669"/>
    <property type="project" value="UniProtKB-SubCell"/>
</dbReference>
<dbReference type="GO" id="GO:0005198">
    <property type="term" value="F:structural molecule activity"/>
    <property type="evidence" value="ECO:0007669"/>
    <property type="project" value="UniProtKB-UniRule"/>
</dbReference>
<dbReference type="GO" id="GO:0075512">
    <property type="term" value="P:clathrin-dependent endocytosis of virus by host cell"/>
    <property type="evidence" value="ECO:0007669"/>
    <property type="project" value="UniProtKB-UniRule"/>
</dbReference>
<dbReference type="GO" id="GO:0039654">
    <property type="term" value="P:fusion of virus membrane with host endosome membrane"/>
    <property type="evidence" value="ECO:0007669"/>
    <property type="project" value="UniProtKB-UniRule"/>
</dbReference>
<dbReference type="GO" id="GO:0019064">
    <property type="term" value="P:fusion of virus membrane with host plasma membrane"/>
    <property type="evidence" value="ECO:0007669"/>
    <property type="project" value="UniProtKB-UniRule"/>
</dbReference>
<dbReference type="GO" id="GO:1903908">
    <property type="term" value="P:positive regulation of plasma membrane raft polarization"/>
    <property type="evidence" value="ECO:0007669"/>
    <property type="project" value="UniProtKB-UniRule"/>
</dbReference>
<dbReference type="GO" id="GO:1903911">
    <property type="term" value="P:positive regulation of receptor clustering"/>
    <property type="evidence" value="ECO:0007669"/>
    <property type="project" value="UniProtKB-UniRule"/>
</dbReference>
<dbReference type="GO" id="GO:0019082">
    <property type="term" value="P:viral protein processing"/>
    <property type="evidence" value="ECO:0007669"/>
    <property type="project" value="UniProtKB-UniRule"/>
</dbReference>
<dbReference type="GO" id="GO:0019062">
    <property type="term" value="P:virion attachment to host cell"/>
    <property type="evidence" value="ECO:0007669"/>
    <property type="project" value="UniProtKB-UniRule"/>
</dbReference>
<dbReference type="CDD" id="cd09909">
    <property type="entry name" value="HIV-1-like_HR1-HR2"/>
    <property type="match status" value="1"/>
</dbReference>
<dbReference type="FunFam" id="1.10.287.210:FF:000001">
    <property type="entry name" value="Envelope glycoprotein gp160"/>
    <property type="match status" value="1"/>
</dbReference>
<dbReference type="FunFam" id="1.20.5.490:FF:000001">
    <property type="entry name" value="Envelope glycoprotein gp160"/>
    <property type="match status" value="1"/>
</dbReference>
<dbReference type="FunFam" id="2.170.40.20:FF:000001">
    <property type="entry name" value="Envelope glycoprotein gp160"/>
    <property type="match status" value="1"/>
</dbReference>
<dbReference type="FunFam" id="2.170.40.20:FF:000003">
    <property type="entry name" value="Envelope glycoprotein gp160"/>
    <property type="match status" value="1"/>
</dbReference>
<dbReference type="Gene3D" id="1.10.287.210">
    <property type="match status" value="1"/>
</dbReference>
<dbReference type="Gene3D" id="2.170.40.20">
    <property type="entry name" value="Human immunodeficiency virus 1, Gp160, envelope glycoprotein"/>
    <property type="match status" value="2"/>
</dbReference>
<dbReference type="Gene3D" id="1.20.5.490">
    <property type="entry name" value="Single helix bin"/>
    <property type="match status" value="1"/>
</dbReference>
<dbReference type="HAMAP" id="MF_04083">
    <property type="entry name" value="HIV_ENV"/>
    <property type="match status" value="1"/>
</dbReference>
<dbReference type="InterPro" id="IPR036377">
    <property type="entry name" value="Gp120_core_sf"/>
</dbReference>
<dbReference type="InterPro" id="IPR037527">
    <property type="entry name" value="Gp160"/>
</dbReference>
<dbReference type="InterPro" id="IPR000328">
    <property type="entry name" value="GP41-like"/>
</dbReference>
<dbReference type="InterPro" id="IPR000777">
    <property type="entry name" value="HIV1_Gp120"/>
</dbReference>
<dbReference type="Pfam" id="PF00516">
    <property type="entry name" value="GP120"/>
    <property type="match status" value="1"/>
</dbReference>
<dbReference type="Pfam" id="PF00517">
    <property type="entry name" value="GP41"/>
    <property type="match status" value="1"/>
</dbReference>
<dbReference type="SUPFAM" id="SSF56502">
    <property type="entry name" value="gp120 core"/>
    <property type="match status" value="1"/>
</dbReference>
<dbReference type="SUPFAM" id="SSF58069">
    <property type="entry name" value="Virus ectodomain"/>
    <property type="match status" value="1"/>
</dbReference>
<name>ENV_HV1LW</name>
<accession>Q70626</accession>
<sequence length="856" mass="96938">MRVKEKYQHLRRWGWRWGTMLLGMLMICSATEKLWVTVYYGVPVWKEATTTLFCASDAKAYDTEVHNVWATHACVPTDPNPQEVVLVNVTENFNMWKNDMVEQMHEDIISLWDQSLKPCVKLTPLCVSLKCTDLKNDTNTNSSSGGMIMEKGEIKNCSFNISTSIRGKVQKEYAFFYKHDIIPIDNDTTSYTLTSCNTSVITQACPKVSFEPIPIHYCAPAGFAILKCNNKTFNGTGPCTNVSTVQCTHGIKPVVSTQLLLNGSLAEEEVVIRSANLTDNVKTIIVQLNQSVEINCTRPNNNTRKRIRIQRGPGRTFVTIGKIGNMRQAHCNISRAKWNNTLKQIASKLREQYGNNKTIIFKQSSGGDLEIVTHSFNCGGEFFYCNSTQLFNSTWFNSTWSTEGSNNTEGSDTITLPCRIKQIINMWQEVGKAMYAPPISGQIRCSSNITGLLLTRDGGNNNNGSEIFRPGGGDMRDNWRSELYKYKVVKIEPLGVAPTKAKRRVVQREKRAVGIGALFLGFLGAAGSTMGAASMTLTVQARQLLSGIVQQQNNLLRAIEAQQHLLQLTVWGIKQLQARILAVERYLKDQQLLGIWGCSGKLICTTAVPWNASWSNKSLEQIWNHTTWMEWDREINNYTSLIHSLIEESQNQQEKNEQELLELDKWASLWNWFNITNWLWYIKIFIMIVGGLVGLRIVFAVLSIVNRVRQGHSPLSFQTHLPTPGGPDRPEGIEEEGGERDRDRSIRLVNGSLALIWDDLRSLCLFSYHRLRDLLLIVTRIVELLGRRGWEALKYWWNLLQYWSQELKNSAVSLLNATAIAVAEGTDRVIEVVQGACRAIRHIPRRIRQGLERILL</sequence>
<organism>
    <name type="scientific">Human immunodeficiency virus type 1 group M subtype B (isolate LW123)</name>
    <name type="common">HIV-1</name>
    <dbReference type="NCBI Taxonomy" id="82834"/>
    <lineage>
        <taxon>Viruses</taxon>
        <taxon>Riboviria</taxon>
        <taxon>Pararnavirae</taxon>
        <taxon>Artverviricota</taxon>
        <taxon>Revtraviricetes</taxon>
        <taxon>Ortervirales</taxon>
        <taxon>Retroviridae</taxon>
        <taxon>Orthoretrovirinae</taxon>
        <taxon>Lentivirus</taxon>
        <taxon>Human immunodeficiency virus type 1</taxon>
    </lineage>
</organism>
<reference key="1">
    <citation type="journal article" date="1994" name="AIDS Res. Hum. Retroviruses">
        <title>Viral variability and serum antibody response in a laboratory worker infected with HIV type 1 (HTLV type IIIB).</title>
        <authorList>
            <person name="Reitz M.S. Jr."/>
            <person name="Hall L."/>
            <person name="Robert-Guroff M."/>
            <person name="Lautenberger J.A."/>
            <person name="Hahn B.M."/>
            <person name="Shaw G.M."/>
            <person name="Kong L.I."/>
            <person name="Weiss S.H."/>
            <person name="Waters D."/>
            <person name="Gallo R.C."/>
            <person name="Blattner W."/>
        </authorList>
    </citation>
    <scope>NUCLEOTIDE SEQUENCE [GENOMIC RNA]</scope>
</reference>
<reference key="2">
    <citation type="journal article" date="2003" name="APMIS">
        <title>Pathogens target DC-SIGN to influence their fate DC-SIGN functions as a pathogen receptor with broad specificity.</title>
        <authorList>
            <person name="Geijtenbeek T.B."/>
            <person name="van Kooyk Y."/>
        </authorList>
    </citation>
    <scope>REVIEW</scope>
</reference>
<reference key="3">
    <citation type="journal article" date="2003" name="Biochim. Biophys. Acta">
        <title>The HIV Env-mediated fusion reaction.</title>
        <authorList>
            <person name="Gallo S.A."/>
            <person name="Finnegan C.M."/>
            <person name="Viard M."/>
            <person name="Raviv Y."/>
            <person name="Dimitrov A."/>
            <person name="Rawat S.S."/>
            <person name="Puri A."/>
            <person name="Durell S."/>
            <person name="Blumenthal R."/>
        </authorList>
    </citation>
    <scope>REVIEW</scope>
</reference>
<reference key="4">
    <citation type="journal article" date="2005" name="Cell Death Differ.">
        <title>Mechanisms of apoptosis induction by the HIV-1 envelope.</title>
        <authorList>
            <person name="Perfettini J.-L."/>
            <person name="Castedo M."/>
            <person name="Roumier T."/>
            <person name="Andreau K."/>
            <person name="Nardacci R."/>
            <person name="Piacentini M."/>
            <person name="Kroemer G."/>
        </authorList>
    </citation>
    <scope>REVIEW</scope>
</reference>
<reference key="5">
    <citation type="journal article" date="2005" name="AIDS Res. Hum. Retroviruses">
        <title>V3: HIV's switch-hitter.</title>
        <authorList>
            <person name="Hartley O."/>
            <person name="Klasse P.J."/>
            <person name="Sattentau Q.J."/>
            <person name="Moore J.P."/>
        </authorList>
    </citation>
    <scope>REVIEW</scope>
</reference>
<reference key="6">
    <citation type="journal article" date="2005" name="Drugs">
        <title>Emerging drug targets for antiretroviral therapy.</title>
        <authorList>
            <person name="Reeves J.D."/>
            <person name="Piefer A.J."/>
        </authorList>
    </citation>
    <scope>REVIEW</scope>
</reference>
<reference key="7">
    <citation type="journal article" date="2006" name="EMBO J.">
        <title>HIV and the chemokine system: 10 years later.</title>
        <authorList>
            <person name="Lusso P."/>
        </authorList>
    </citation>
    <scope>REVIEW</scope>
</reference>